<sequence>MSFVIAQPEMIAAAAGELASIRSAINAANAAAAAQTTGVMSAAADEVSTAVAALFSSHAQAYQAASAQAAAFHAQVVRTLTVDAGAYASAEAANAGPNMLAAVNAPAQALLGRPLIGNGANGAPGTGQAGGDGGLLFGNGGNGGSGAPGQAGGAGGAAGFFGNGGNGGDGGAGANGGAGGTAGWFFGFGGNGGAGGIGVAGINGGLGGAGGDGGNAGFFGNGGNGGMGGAGAAGVNAVNPGLATPVTPAANGGNGLNLVGVPGTAGGGADGANGSAIGQAGGAGGDGGNASTSGGIGIAQTGGAGGAGGAGGDGAPGGNGGNGGSVEHTGATGSSASGGNGATGGNGGVGAPGGAGGNGGHVSGGSVNTAGAGGKGGNGGTGGAGGPGGHGGSVLSGPVGDSGNGGAGGDGGAGVSATDIAGTGGRGGNGGHGGLWIGNGGDGGAGGVGGVGGAGAAGAIGGHGGDGGSVNTPIGGSEAGDGGKGGLGGDGGGRGIFGQFGAGGAGGAGGVGGAGGAGGTGGGGGNGGAIFNAGTPGAAGTGGDGGVGGTGAAGGKGGAGGSGGVNGATGADGAKGLDGATGGKGNNGNPG</sequence>
<proteinExistence type="evidence at protein level"/>
<evidence type="ECO:0000255" key="1"/>
<evidence type="ECO:0000256" key="2">
    <source>
        <dbReference type="SAM" id="MobiDB-lite"/>
    </source>
</evidence>
<evidence type="ECO:0000269" key="3">
    <source>
    </source>
</evidence>
<evidence type="ECO:0000305" key="4"/>
<evidence type="ECO:0000305" key="5">
    <source>
    </source>
</evidence>
<evidence type="ECO:0000312" key="6">
    <source>
        <dbReference type="EMBL" id="CCP43027.1"/>
    </source>
</evidence>
<evidence type="ECO:0007744" key="7">
    <source>
    </source>
</evidence>
<feature type="chain" id="PRO_0000445087" description="PE-PGRS family protein PE_PGRS5">
    <location>
        <begin position="1"/>
        <end position="591"/>
    </location>
</feature>
<feature type="domain" description="PE" evidence="1">
    <location>
        <begin position="1"/>
        <end position="93"/>
    </location>
</feature>
<feature type="region of interest" description="PGRS" evidence="5">
    <location>
        <begin position="94"/>
        <end position="591"/>
    </location>
</feature>
<feature type="region of interest" description="Disordered" evidence="2">
    <location>
        <begin position="303"/>
        <end position="412"/>
    </location>
</feature>
<feature type="region of interest" description="Disordered" evidence="2">
    <location>
        <begin position="468"/>
        <end position="491"/>
    </location>
</feature>
<feature type="region of interest" description="Disordered" evidence="2">
    <location>
        <begin position="539"/>
        <end position="591"/>
    </location>
</feature>
<feature type="compositionally biased region" description="Gly residues" evidence="2">
    <location>
        <begin position="303"/>
        <end position="324"/>
    </location>
</feature>
<feature type="compositionally biased region" description="Gly residues" evidence="2">
    <location>
        <begin position="336"/>
        <end position="363"/>
    </location>
</feature>
<feature type="compositionally biased region" description="Gly residues" evidence="2">
    <location>
        <begin position="371"/>
        <end position="412"/>
    </location>
</feature>
<feature type="compositionally biased region" description="Gly residues" evidence="2">
    <location>
        <begin position="477"/>
        <end position="491"/>
    </location>
</feature>
<feature type="compositionally biased region" description="Gly residues" evidence="2">
    <location>
        <begin position="539"/>
        <end position="567"/>
    </location>
</feature>
<feature type="compositionally biased region" description="Gly residues" evidence="2">
    <location>
        <begin position="579"/>
        <end position="591"/>
    </location>
</feature>
<keyword id="KW-1038">Host endoplasmic reticulum</keyword>
<keyword id="KW-1185">Reference proteome</keyword>
<keyword id="KW-0843">Virulence</keyword>
<reference key="1">
    <citation type="journal article" date="1998" name="Nature">
        <title>Deciphering the biology of Mycobacterium tuberculosis from the complete genome sequence.</title>
        <authorList>
            <person name="Cole S.T."/>
            <person name="Brosch R."/>
            <person name="Parkhill J."/>
            <person name="Garnier T."/>
            <person name="Churcher C.M."/>
            <person name="Harris D.E."/>
            <person name="Gordon S.V."/>
            <person name="Eiglmeier K."/>
            <person name="Gas S."/>
            <person name="Barry C.E. III"/>
            <person name="Tekaia F."/>
            <person name="Badcock K."/>
            <person name="Basham D."/>
            <person name="Brown D."/>
            <person name="Chillingworth T."/>
            <person name="Connor R."/>
            <person name="Davies R.M."/>
            <person name="Devlin K."/>
            <person name="Feltwell T."/>
            <person name="Gentles S."/>
            <person name="Hamlin N."/>
            <person name="Holroyd S."/>
            <person name="Hornsby T."/>
            <person name="Jagels K."/>
            <person name="Krogh A."/>
            <person name="McLean J."/>
            <person name="Moule S."/>
            <person name="Murphy L.D."/>
            <person name="Oliver S."/>
            <person name="Osborne J."/>
            <person name="Quail M.A."/>
            <person name="Rajandream M.A."/>
            <person name="Rogers J."/>
            <person name="Rutter S."/>
            <person name="Seeger K."/>
            <person name="Skelton S."/>
            <person name="Squares S."/>
            <person name="Squares R."/>
            <person name="Sulston J.E."/>
            <person name="Taylor K."/>
            <person name="Whitehead S."/>
            <person name="Barrell B.G."/>
        </authorList>
    </citation>
    <scope>NUCLEOTIDE SEQUENCE [LARGE SCALE GENOMIC DNA]</scope>
    <source>
        <strain>ATCC 25618 / H37Rv</strain>
    </source>
</reference>
<reference evidence="7" key="2">
    <citation type="journal article" date="2011" name="Mol. Cell. Proteomics">
        <title>Proteogenomic analysis of Mycobacterium tuberculosis by high resolution mass spectrometry.</title>
        <authorList>
            <person name="Kelkar D.S."/>
            <person name="Kumar D."/>
            <person name="Kumar P."/>
            <person name="Balakrishnan L."/>
            <person name="Muthusamy B."/>
            <person name="Yadav A.K."/>
            <person name="Shrivastava P."/>
            <person name="Marimuthu A."/>
            <person name="Anand S."/>
            <person name="Sundaram H."/>
            <person name="Kingsbury R."/>
            <person name="Harsha H.C."/>
            <person name="Nair B."/>
            <person name="Prasad T.S."/>
            <person name="Chauhan D.S."/>
            <person name="Katoch K."/>
            <person name="Katoch V.M."/>
            <person name="Kumar P."/>
            <person name="Chaerkady R."/>
            <person name="Ramachandran S."/>
            <person name="Dash D."/>
            <person name="Pandey A."/>
        </authorList>
    </citation>
    <scope>IDENTIFICATION BY MASS SPECTROMETRY [LARGE SCALE ANALYSIS]</scope>
</reference>
<reference key="3">
    <citation type="journal article" date="2018" name="MBio">
        <title>The PGRS domain of Mycobacterium tuberculosis PE_PGRS protein Rv0297 is involved in endoplasmic reticulum stress-mediated apoptosis through Toll-like receptor 4.</title>
        <authorList>
            <person name="Grover S."/>
            <person name="Sharma T."/>
            <person name="Singh Y."/>
            <person name="Kohli S."/>
            <person name="P M."/>
            <person name="Singh A."/>
            <person name="Semmler T."/>
            <person name="Wieler L.H."/>
            <person name="Tedin K."/>
            <person name="Ehtesham N.Z."/>
            <person name="Hasnain S.E."/>
        </authorList>
    </citation>
    <scope>FUNCTION</scope>
    <scope>INTERACTION WITH TLR4</scope>
    <scope>SUBCELLULAR LOCATION</scope>
    <scope>DOMAIN</scope>
    <source>
        <strain>H37Rv</strain>
    </source>
</reference>
<comment type="function">
    <text evidence="3">Involved in endoplasmic reticulum (ER) stress-mediated apoptosis through human Toll-like receptor 4 (TLR4) signaling pathway. Localizes to the host ER, leading to ER stress, disruption of intracellular Ca(2+) homeostasis and increase of nitric oxide (NO) and reactive oxygen species (ROS) levels. Stress response results in caspase-8 activation and apoptosis of macrophage cells. Apoptosis may lead to dissemination of the bacteria, thereby spreading the disease.</text>
</comment>
<comment type="subunit">
    <text evidence="3">Interacts with human TLR4.</text>
</comment>
<comment type="subcellular location">
    <subcellularLocation>
        <location evidence="3">Host endoplasmic reticulum</location>
    </subcellularLocation>
</comment>
<comment type="domain">
    <text evidence="3">The PGRS region is important for localization and function.</text>
</comment>
<comment type="similarity">
    <text evidence="4">Belongs to the mycobacterial PE family. PGRS subfamily.</text>
</comment>
<name>PG05_MYCTU</name>
<organism>
    <name type="scientific">Mycobacterium tuberculosis (strain ATCC 25618 / H37Rv)</name>
    <dbReference type="NCBI Taxonomy" id="83332"/>
    <lineage>
        <taxon>Bacteria</taxon>
        <taxon>Bacillati</taxon>
        <taxon>Actinomycetota</taxon>
        <taxon>Actinomycetes</taxon>
        <taxon>Mycobacteriales</taxon>
        <taxon>Mycobacteriaceae</taxon>
        <taxon>Mycobacterium</taxon>
        <taxon>Mycobacterium tuberculosis complex</taxon>
    </lineage>
</organism>
<dbReference type="EMBL" id="AL123456">
    <property type="protein sequence ID" value="CCP43027.1"/>
    <property type="molecule type" value="Genomic_DNA"/>
</dbReference>
<dbReference type="RefSeq" id="WP_010886074.1">
    <property type="nucleotide sequence ID" value="NZ_KK339370.1"/>
</dbReference>
<dbReference type="RefSeq" id="YP_177713.1">
    <property type="nucleotide sequence ID" value="NC_000962.3"/>
</dbReference>
<dbReference type="SMR" id="Q6MX50"/>
<dbReference type="STRING" id="83332.Rv0297"/>
<dbReference type="PaxDb" id="83332-Rv0297"/>
<dbReference type="DNASU" id="885981"/>
<dbReference type="GeneID" id="885981"/>
<dbReference type="KEGG" id="mtu:Rv0297"/>
<dbReference type="KEGG" id="mtv:RVBD_0297"/>
<dbReference type="PATRIC" id="fig|83332.111.peg.333"/>
<dbReference type="TubercuList" id="Rv0297"/>
<dbReference type="eggNOG" id="COG3391">
    <property type="taxonomic scope" value="Bacteria"/>
</dbReference>
<dbReference type="InParanoid" id="Q6MX50"/>
<dbReference type="PHI-base" id="PHI:10921"/>
<dbReference type="Proteomes" id="UP000001584">
    <property type="component" value="Chromosome"/>
</dbReference>
<dbReference type="GO" id="GO:0044165">
    <property type="term" value="C:host cell endoplasmic reticulum"/>
    <property type="evidence" value="ECO:0007669"/>
    <property type="project" value="UniProtKB-SubCell"/>
</dbReference>
<dbReference type="Gene3D" id="1.10.287.850">
    <property type="entry name" value="HP0062-like domain"/>
    <property type="match status" value="1"/>
</dbReference>
<dbReference type="InterPro" id="IPR000084">
    <property type="entry name" value="PE-PGRS_N"/>
</dbReference>
<dbReference type="InterPro" id="IPR048996">
    <property type="entry name" value="PGRS_rpt"/>
</dbReference>
<dbReference type="Pfam" id="PF00934">
    <property type="entry name" value="PE"/>
    <property type="match status" value="1"/>
</dbReference>
<dbReference type="Pfam" id="PF21526">
    <property type="entry name" value="PGRS"/>
    <property type="match status" value="1"/>
</dbReference>
<dbReference type="SUPFAM" id="SSF140459">
    <property type="entry name" value="PE/PPE dimer-like"/>
    <property type="match status" value="1"/>
</dbReference>
<accession>Q6MX50</accession>
<accession>I6Y3F7</accession>
<accession>L0T693</accession>
<protein>
    <recommendedName>
        <fullName evidence="4">PE-PGRS family protein PE_PGRS5</fullName>
    </recommendedName>
</protein>
<gene>
    <name evidence="6" type="primary">PE_PGRS5</name>
    <name evidence="6" type="ordered locus">Rv0297</name>
</gene>